<gene>
    <name type="primary">dbp3</name>
    <name type="ORF">SPBC17D1.06</name>
</gene>
<evidence type="ECO:0000250" key="1"/>
<evidence type="ECO:0000255" key="2">
    <source>
        <dbReference type="PROSITE-ProRule" id="PRU00541"/>
    </source>
</evidence>
<evidence type="ECO:0000255" key="3">
    <source>
        <dbReference type="PROSITE-ProRule" id="PRU00542"/>
    </source>
</evidence>
<evidence type="ECO:0000256" key="4">
    <source>
        <dbReference type="SAM" id="MobiDB-lite"/>
    </source>
</evidence>
<evidence type="ECO:0000305" key="5"/>
<protein>
    <recommendedName>
        <fullName>ATP-dependent RNA helicase dbp3</fullName>
        <ecNumber>3.6.4.13</ecNumber>
    </recommendedName>
</protein>
<keyword id="KW-0067">ATP-binding</keyword>
<keyword id="KW-0347">Helicase</keyword>
<keyword id="KW-0378">Hydrolase</keyword>
<keyword id="KW-0547">Nucleotide-binding</keyword>
<keyword id="KW-0539">Nucleus</keyword>
<keyword id="KW-1185">Reference proteome</keyword>
<keyword id="KW-0690">Ribosome biogenesis</keyword>
<keyword id="KW-0694">RNA-binding</keyword>
<keyword id="KW-0698">rRNA processing</keyword>
<proteinExistence type="inferred from homology"/>
<comment type="function">
    <text evidence="1">ATP-dependent RNA helicase required for 60S ribosomal subunit synthesis. Involved in efficient pre-rRNA processing, predominantly at site A3, which is necessary for the normal formation of 25S and 5.8S rRNAs (By similarity).</text>
</comment>
<comment type="catalytic activity">
    <reaction>
        <text>ATP + H2O = ADP + phosphate + H(+)</text>
        <dbReference type="Rhea" id="RHEA:13065"/>
        <dbReference type="ChEBI" id="CHEBI:15377"/>
        <dbReference type="ChEBI" id="CHEBI:15378"/>
        <dbReference type="ChEBI" id="CHEBI:30616"/>
        <dbReference type="ChEBI" id="CHEBI:43474"/>
        <dbReference type="ChEBI" id="CHEBI:456216"/>
        <dbReference type="EC" id="3.6.4.13"/>
    </reaction>
</comment>
<comment type="subcellular location">
    <subcellularLocation>
        <location evidence="1">Nucleus</location>
        <location evidence="1">Nucleolus</location>
    </subcellularLocation>
</comment>
<comment type="domain">
    <text>The Q motif is unique to and characteristic of the DEAD box family of RNA helicases and controls ATP binding and hydrolysis.</text>
</comment>
<comment type="similarity">
    <text evidence="5">Belongs to the DEAD box helicase family. DDX5/DBP2 subfamily.</text>
</comment>
<organism>
    <name type="scientific">Schizosaccharomyces pombe (strain 972 / ATCC 24843)</name>
    <name type="common">Fission yeast</name>
    <dbReference type="NCBI Taxonomy" id="284812"/>
    <lineage>
        <taxon>Eukaryota</taxon>
        <taxon>Fungi</taxon>
        <taxon>Dikarya</taxon>
        <taxon>Ascomycota</taxon>
        <taxon>Taphrinomycotina</taxon>
        <taxon>Schizosaccharomycetes</taxon>
        <taxon>Schizosaccharomycetales</taxon>
        <taxon>Schizosaccharomycetaceae</taxon>
        <taxon>Schizosaccharomyces</taxon>
    </lineage>
</organism>
<name>DBP3_SCHPO</name>
<dbReference type="EC" id="3.6.4.13"/>
<dbReference type="EMBL" id="CU329671">
    <property type="protein sequence ID" value="CAA20430.1"/>
    <property type="molecule type" value="Genomic_DNA"/>
</dbReference>
<dbReference type="PIR" id="T39709">
    <property type="entry name" value="S67386"/>
</dbReference>
<dbReference type="RefSeq" id="NP_596388.1">
    <property type="nucleotide sequence ID" value="NM_001022309.2"/>
</dbReference>
<dbReference type="SMR" id="Q10202"/>
<dbReference type="BioGRID" id="276746">
    <property type="interactions" value="16"/>
</dbReference>
<dbReference type="FunCoup" id="Q10202">
    <property type="interactions" value="230"/>
</dbReference>
<dbReference type="STRING" id="284812.Q10202"/>
<dbReference type="iPTMnet" id="Q10202"/>
<dbReference type="SwissPalm" id="Q10202"/>
<dbReference type="PaxDb" id="4896-SPBC17D1.06.1"/>
<dbReference type="EnsemblFungi" id="SPBC17D1.06.1">
    <property type="protein sequence ID" value="SPBC17D1.06.1:pep"/>
    <property type="gene ID" value="SPBC17D1.06"/>
</dbReference>
<dbReference type="GeneID" id="2540213"/>
<dbReference type="KEGG" id="spo:2540213"/>
<dbReference type="PomBase" id="SPBC17D1.06">
    <property type="gene designation" value="dbp3"/>
</dbReference>
<dbReference type="VEuPathDB" id="FungiDB:SPBC17D1.06"/>
<dbReference type="eggNOG" id="KOG0331">
    <property type="taxonomic scope" value="Eukaryota"/>
</dbReference>
<dbReference type="HOGENOM" id="CLU_003041_1_5_1"/>
<dbReference type="InParanoid" id="Q10202"/>
<dbReference type="OMA" id="KKTHDMY"/>
<dbReference type="PhylomeDB" id="Q10202"/>
<dbReference type="PRO" id="PR:Q10202"/>
<dbReference type="Proteomes" id="UP000002485">
    <property type="component" value="Chromosome II"/>
</dbReference>
<dbReference type="GO" id="GO:0005730">
    <property type="term" value="C:nucleolus"/>
    <property type="evidence" value="ECO:0007005"/>
    <property type="project" value="PomBase"/>
</dbReference>
<dbReference type="GO" id="GO:0005524">
    <property type="term" value="F:ATP binding"/>
    <property type="evidence" value="ECO:0000255"/>
    <property type="project" value="PomBase"/>
</dbReference>
<dbReference type="GO" id="GO:0016887">
    <property type="term" value="F:ATP hydrolysis activity"/>
    <property type="evidence" value="ECO:0007669"/>
    <property type="project" value="RHEA"/>
</dbReference>
<dbReference type="GO" id="GO:0003729">
    <property type="term" value="F:mRNA binding"/>
    <property type="evidence" value="ECO:0000318"/>
    <property type="project" value="GO_Central"/>
</dbReference>
<dbReference type="GO" id="GO:0003724">
    <property type="term" value="F:RNA helicase activity"/>
    <property type="evidence" value="ECO:0000318"/>
    <property type="project" value="GO_Central"/>
</dbReference>
<dbReference type="GO" id="GO:0006364">
    <property type="term" value="P:rRNA processing"/>
    <property type="evidence" value="ECO:0000318"/>
    <property type="project" value="GO_Central"/>
</dbReference>
<dbReference type="CDD" id="cd00268">
    <property type="entry name" value="DEADc"/>
    <property type="match status" value="1"/>
</dbReference>
<dbReference type="CDD" id="cd18787">
    <property type="entry name" value="SF2_C_DEAD"/>
    <property type="match status" value="1"/>
</dbReference>
<dbReference type="FunFam" id="3.40.50.300:FF:000008">
    <property type="entry name" value="ATP-dependent RNA helicase RhlB"/>
    <property type="match status" value="1"/>
</dbReference>
<dbReference type="Gene3D" id="3.40.50.300">
    <property type="entry name" value="P-loop containing nucleotide triphosphate hydrolases"/>
    <property type="match status" value="2"/>
</dbReference>
<dbReference type="InterPro" id="IPR011545">
    <property type="entry name" value="DEAD/DEAH_box_helicase_dom"/>
</dbReference>
<dbReference type="InterPro" id="IPR014001">
    <property type="entry name" value="Helicase_ATP-bd"/>
</dbReference>
<dbReference type="InterPro" id="IPR001650">
    <property type="entry name" value="Helicase_C-like"/>
</dbReference>
<dbReference type="InterPro" id="IPR027417">
    <property type="entry name" value="P-loop_NTPase"/>
</dbReference>
<dbReference type="InterPro" id="IPR000629">
    <property type="entry name" value="RNA-helicase_DEAD-box_CS"/>
</dbReference>
<dbReference type="InterPro" id="IPR014014">
    <property type="entry name" value="RNA_helicase_DEAD_Q_motif"/>
</dbReference>
<dbReference type="PANTHER" id="PTHR47958">
    <property type="entry name" value="ATP-DEPENDENT RNA HELICASE DBP3"/>
    <property type="match status" value="1"/>
</dbReference>
<dbReference type="Pfam" id="PF00270">
    <property type="entry name" value="DEAD"/>
    <property type="match status" value="1"/>
</dbReference>
<dbReference type="Pfam" id="PF00271">
    <property type="entry name" value="Helicase_C"/>
    <property type="match status" value="1"/>
</dbReference>
<dbReference type="SMART" id="SM00487">
    <property type="entry name" value="DEXDc"/>
    <property type="match status" value="1"/>
</dbReference>
<dbReference type="SMART" id="SM00490">
    <property type="entry name" value="HELICc"/>
    <property type="match status" value="1"/>
</dbReference>
<dbReference type="SUPFAM" id="SSF52540">
    <property type="entry name" value="P-loop containing nucleoside triphosphate hydrolases"/>
    <property type="match status" value="1"/>
</dbReference>
<dbReference type="PROSITE" id="PS00039">
    <property type="entry name" value="DEAD_ATP_HELICASE"/>
    <property type="match status" value="1"/>
</dbReference>
<dbReference type="PROSITE" id="PS51192">
    <property type="entry name" value="HELICASE_ATP_BIND_1"/>
    <property type="match status" value="1"/>
</dbReference>
<dbReference type="PROSITE" id="PS51194">
    <property type="entry name" value="HELICASE_CTER"/>
    <property type="match status" value="1"/>
</dbReference>
<dbReference type="PROSITE" id="PS51195">
    <property type="entry name" value="Q_MOTIF"/>
    <property type="match status" value="1"/>
</dbReference>
<feature type="chain" id="PRO_0000055088" description="ATP-dependent RNA helicase dbp3">
    <location>
        <begin position="1"/>
        <end position="578"/>
    </location>
</feature>
<feature type="domain" description="Helicase ATP-binding" evidence="2">
    <location>
        <begin position="196"/>
        <end position="373"/>
    </location>
</feature>
<feature type="domain" description="Helicase C-terminal" evidence="3">
    <location>
        <begin position="402"/>
        <end position="550"/>
    </location>
</feature>
<feature type="region of interest" description="Disordered" evidence="4">
    <location>
        <begin position="59"/>
        <end position="117"/>
    </location>
</feature>
<feature type="short sequence motif" description="Q motif">
    <location>
        <begin position="167"/>
        <end position="193"/>
    </location>
</feature>
<feature type="short sequence motif" description="DEAD box">
    <location>
        <begin position="316"/>
        <end position="319"/>
    </location>
</feature>
<feature type="compositionally biased region" description="Basic and acidic residues" evidence="4">
    <location>
        <begin position="59"/>
        <end position="69"/>
    </location>
</feature>
<feature type="compositionally biased region" description="Basic residues" evidence="4">
    <location>
        <begin position="70"/>
        <end position="85"/>
    </location>
</feature>
<feature type="compositionally biased region" description="Basic and acidic residues" evidence="4">
    <location>
        <begin position="86"/>
        <end position="95"/>
    </location>
</feature>
<feature type="compositionally biased region" description="Basic residues" evidence="4">
    <location>
        <begin position="96"/>
        <end position="107"/>
    </location>
</feature>
<feature type="binding site" evidence="2">
    <location>
        <begin position="209"/>
        <end position="216"/>
    </location>
    <ligand>
        <name>ATP</name>
        <dbReference type="ChEBI" id="CHEBI:30616"/>
    </ligand>
</feature>
<accession>Q10202</accession>
<sequence>MQFCFRILILYISLSIDNNYLVTTLISLKENVFLHIFTLTFLFKAFLLKMAKRSVEELKRSADEEASVKRKEKKSKHEHKKHKKDKPSADKDRISKKDKKKSKKGKSKTKEESIEINAEEGAKIAQPAIGSANASNHNDEEAYDRYIKKHNISFADPKSSENLLPILQFDELDVSAKLREGLKNYKEPTPIQAATWPYLLAGRDVVGIAETGSGKTVAFGIPALQYLNGLSDNKSVPRVLVVSPTRELAIQTYENLNSLIQGTNLKAVVVYGGAPKSEQARAAKNASVIIGTPGRLLDLINDGSIDCSQVGYLVLDEADRMLDTGFEQDIRNIISHTPDPTRNGSRQTVFFSATWPESVRALAATFLKDPVKITIGSDELAASQNITQIVEILDDPRSKERMLDNLLRKHLSSGGKDDKILIFVLYKKEAARVEGTLARKYNVVGIHGDMSQGARLQALNDFKSGKCPVLVATDVAARGLDIPKVQLVINVTFPLTIEDYVHRIGRTGRANTKGTAITFFTPQDKSHAGELVNVLRQAKQDIPEGLFKFGTAVKPKLNAYGSRVVDVPVKAATKIVFD</sequence>
<reference key="1">
    <citation type="journal article" date="2002" name="Nature">
        <title>The genome sequence of Schizosaccharomyces pombe.</title>
        <authorList>
            <person name="Wood V."/>
            <person name="Gwilliam R."/>
            <person name="Rajandream M.A."/>
            <person name="Lyne M.H."/>
            <person name="Lyne R."/>
            <person name="Stewart A."/>
            <person name="Sgouros J.G."/>
            <person name="Peat N."/>
            <person name="Hayles J."/>
            <person name="Baker S.G."/>
            <person name="Basham D."/>
            <person name="Bowman S."/>
            <person name="Brooks K."/>
            <person name="Brown D."/>
            <person name="Brown S."/>
            <person name="Chillingworth T."/>
            <person name="Churcher C.M."/>
            <person name="Collins M."/>
            <person name="Connor R."/>
            <person name="Cronin A."/>
            <person name="Davis P."/>
            <person name="Feltwell T."/>
            <person name="Fraser A."/>
            <person name="Gentles S."/>
            <person name="Goble A."/>
            <person name="Hamlin N."/>
            <person name="Harris D.E."/>
            <person name="Hidalgo J."/>
            <person name="Hodgson G."/>
            <person name="Holroyd S."/>
            <person name="Hornsby T."/>
            <person name="Howarth S."/>
            <person name="Huckle E.J."/>
            <person name="Hunt S."/>
            <person name="Jagels K."/>
            <person name="James K.D."/>
            <person name="Jones L."/>
            <person name="Jones M."/>
            <person name="Leather S."/>
            <person name="McDonald S."/>
            <person name="McLean J."/>
            <person name="Mooney P."/>
            <person name="Moule S."/>
            <person name="Mungall K.L."/>
            <person name="Murphy L.D."/>
            <person name="Niblett D."/>
            <person name="Odell C."/>
            <person name="Oliver K."/>
            <person name="O'Neil S."/>
            <person name="Pearson D."/>
            <person name="Quail M.A."/>
            <person name="Rabbinowitsch E."/>
            <person name="Rutherford K.M."/>
            <person name="Rutter S."/>
            <person name="Saunders D."/>
            <person name="Seeger K."/>
            <person name="Sharp S."/>
            <person name="Skelton J."/>
            <person name="Simmonds M.N."/>
            <person name="Squares R."/>
            <person name="Squares S."/>
            <person name="Stevens K."/>
            <person name="Taylor K."/>
            <person name="Taylor R.G."/>
            <person name="Tivey A."/>
            <person name="Walsh S.V."/>
            <person name="Warren T."/>
            <person name="Whitehead S."/>
            <person name="Woodward J.R."/>
            <person name="Volckaert G."/>
            <person name="Aert R."/>
            <person name="Robben J."/>
            <person name="Grymonprez B."/>
            <person name="Weltjens I."/>
            <person name="Vanstreels E."/>
            <person name="Rieger M."/>
            <person name="Schaefer M."/>
            <person name="Mueller-Auer S."/>
            <person name="Gabel C."/>
            <person name="Fuchs M."/>
            <person name="Duesterhoeft A."/>
            <person name="Fritzc C."/>
            <person name="Holzer E."/>
            <person name="Moestl D."/>
            <person name="Hilbert H."/>
            <person name="Borzym K."/>
            <person name="Langer I."/>
            <person name="Beck A."/>
            <person name="Lehrach H."/>
            <person name="Reinhardt R."/>
            <person name="Pohl T.M."/>
            <person name="Eger P."/>
            <person name="Zimmermann W."/>
            <person name="Wedler H."/>
            <person name="Wambutt R."/>
            <person name="Purnelle B."/>
            <person name="Goffeau A."/>
            <person name="Cadieu E."/>
            <person name="Dreano S."/>
            <person name="Gloux S."/>
            <person name="Lelaure V."/>
            <person name="Mottier S."/>
            <person name="Galibert F."/>
            <person name="Aves S.J."/>
            <person name="Xiang Z."/>
            <person name="Hunt C."/>
            <person name="Moore K."/>
            <person name="Hurst S.M."/>
            <person name="Lucas M."/>
            <person name="Rochet M."/>
            <person name="Gaillardin C."/>
            <person name="Tallada V.A."/>
            <person name="Garzon A."/>
            <person name="Thode G."/>
            <person name="Daga R.R."/>
            <person name="Cruzado L."/>
            <person name="Jimenez J."/>
            <person name="Sanchez M."/>
            <person name="del Rey F."/>
            <person name="Benito J."/>
            <person name="Dominguez A."/>
            <person name="Revuelta J.L."/>
            <person name="Moreno S."/>
            <person name="Armstrong J."/>
            <person name="Forsburg S.L."/>
            <person name="Cerutti L."/>
            <person name="Lowe T."/>
            <person name="McCombie W.R."/>
            <person name="Paulsen I."/>
            <person name="Potashkin J."/>
            <person name="Shpakovski G.V."/>
            <person name="Ussery D."/>
            <person name="Barrell B.G."/>
            <person name="Nurse P."/>
        </authorList>
    </citation>
    <scope>NUCLEOTIDE SEQUENCE [LARGE SCALE GENOMIC DNA]</scope>
    <source>
        <strain>972 / ATCC 24843</strain>
    </source>
</reference>